<feature type="initiator methionine" description="Removed">
    <location>
        <position position="1"/>
    </location>
</feature>
<feature type="chain" id="PRO_0000122294" description="S-triazine hydrolase">
    <location>
        <begin position="2"/>
        <end position="477"/>
    </location>
</feature>
<feature type="region of interest" description="Disordered" evidence="1">
    <location>
        <begin position="38"/>
        <end position="77"/>
    </location>
</feature>
<feature type="region of interest" description="Disordered" evidence="1">
    <location>
        <begin position="120"/>
        <end position="143"/>
    </location>
</feature>
<feature type="compositionally biased region" description="Low complexity" evidence="1">
    <location>
        <begin position="38"/>
        <end position="73"/>
    </location>
</feature>
<feature type="compositionally biased region" description="Low complexity" evidence="1">
    <location>
        <begin position="120"/>
        <end position="132"/>
    </location>
</feature>
<reference key="1">
    <citation type="journal article" date="1995" name="J. Bacteriol.">
        <title>Cloning and expression of the s-triazine hydrolase gene (trzA) from Rhodococcus corallinus and development of Rhodococcus recombinant strains capable of dealkylating and dechlorinating the herbicide atrazine.</title>
        <authorList>
            <person name="Shao Z.Q."/>
            <person name="Seffens W."/>
            <person name="Mulbry W."/>
            <person name="Behki R.M."/>
        </authorList>
    </citation>
    <scope>NUCLEOTIDE SEQUENCE [GENOMIC DNA]</scope>
    <scope>PARTIAL PROTEIN SEQUENCE</scope>
    <source>
        <strain>DSM 10347 / NRRL B-15444R</strain>
    </source>
</reference>
<name>TRZA_GORRU</name>
<protein>
    <recommendedName>
        <fullName>S-triazine hydrolase</fullName>
        <ecNumber>3.8.1.-</ecNumber>
    </recommendedName>
    <alternativeName>
        <fullName>N-ethylammeline chlorohydrolase</fullName>
    </alternativeName>
</protein>
<organism>
    <name type="scientific">Gordonia rubripertincta</name>
    <name type="common">Rhodococcus corallinus</name>
    <dbReference type="NCBI Taxonomy" id="36822"/>
    <lineage>
        <taxon>Bacteria</taxon>
        <taxon>Bacillati</taxon>
        <taxon>Actinomycetota</taxon>
        <taxon>Actinomycetes</taxon>
        <taxon>Mycobacteriales</taxon>
        <taxon>Gordoniaceae</taxon>
        <taxon>Gordonia</taxon>
    </lineage>
</organism>
<dbReference type="EC" id="3.8.1.-"/>
<dbReference type="EMBL" id="L16534">
    <property type="protein sequence ID" value="AAA90931.1"/>
    <property type="molecule type" value="Genomic_DNA"/>
</dbReference>
<dbReference type="PIR" id="T46666">
    <property type="entry name" value="T46666"/>
</dbReference>
<dbReference type="SMR" id="Q52725"/>
<dbReference type="BioCyc" id="MetaCyc:MONOMER-13551"/>
<dbReference type="UniPathway" id="UPA00889"/>
<dbReference type="GO" id="GO:0016810">
    <property type="term" value="F:hydrolase activity, acting on carbon-nitrogen (but not peptide) bonds"/>
    <property type="evidence" value="ECO:0007669"/>
    <property type="project" value="InterPro"/>
</dbReference>
<dbReference type="Gene3D" id="3.20.20.140">
    <property type="entry name" value="Metal-dependent hydrolases"/>
    <property type="match status" value="1"/>
</dbReference>
<dbReference type="Gene3D" id="2.30.40.10">
    <property type="entry name" value="Urease, subunit C, domain 1"/>
    <property type="match status" value="1"/>
</dbReference>
<dbReference type="InterPro" id="IPR006680">
    <property type="entry name" value="Amidohydro-rel"/>
</dbReference>
<dbReference type="InterPro" id="IPR011059">
    <property type="entry name" value="Metal-dep_hydrolase_composite"/>
</dbReference>
<dbReference type="InterPro" id="IPR032466">
    <property type="entry name" value="Metal_Hydrolase"/>
</dbReference>
<dbReference type="InterPro" id="IPR050287">
    <property type="entry name" value="MTA/SAH_deaminase"/>
</dbReference>
<dbReference type="PANTHER" id="PTHR43794:SF11">
    <property type="entry name" value="AMIDOHYDROLASE-RELATED DOMAIN-CONTAINING PROTEIN"/>
    <property type="match status" value="1"/>
</dbReference>
<dbReference type="PANTHER" id="PTHR43794">
    <property type="entry name" value="AMINOHYDROLASE SSNA-RELATED"/>
    <property type="match status" value="1"/>
</dbReference>
<dbReference type="Pfam" id="PF01979">
    <property type="entry name" value="Amidohydro_1"/>
    <property type="match status" value="1"/>
</dbReference>
<dbReference type="SUPFAM" id="SSF51338">
    <property type="entry name" value="Composite domain of metallo-dependent hydrolases"/>
    <property type="match status" value="1"/>
</dbReference>
<dbReference type="SUPFAM" id="SSF51556">
    <property type="entry name" value="Metallo-dependent hydrolases"/>
    <property type="match status" value="1"/>
</dbReference>
<sequence length="477" mass="50858">MTRIAITGGRVLTMDPERRVLEPGTVVVEDQFIAQVGSPTTSTSAAPKSSTPPGWQCSPASSTPTPTSHKSSSGVVHPMTATSSNGCTTCSIPASLPTQTTTSESEHCCTAPKPFVLASPLSSTTRTSDPTTSPAPGPPGSPFTDAGIRAIYARMYFDAPRAELEELVATIHAKAPGAVRMDESASTDHVLADLDQLITRHDRTADGRIRVWPAPAIPFMVSEKGMKAAQEIAASRTDGWTMHVSEDPIEARVHSMNAPEYLHHLGCLDDRLLAAHCVHIDSRDIRLFRQHDVKISTQPVSNSYLAAGIAPVPEMLAHGVTVGIGTDDANCNDSVNLISDMKVLALIHRAAHRDASIITPEKIIEMATIDGARCIGMADQIGSLEAGKRADIITLDLRHAQTTPAHDLAATIVFQAYGNEVNDVLVNGSVVMRDRVLSFLPTPQEEKALYDDASERSAAMLARAGLTGTRTWQTLGS</sequence>
<keyword id="KW-0903">Direct protein sequencing</keyword>
<keyword id="KW-0378">Hydrolase</keyword>
<proteinExistence type="evidence at protein level"/>
<gene>
    <name type="primary">trzA</name>
</gene>
<evidence type="ECO:0000256" key="1">
    <source>
        <dbReference type="SAM" id="MobiDB-lite"/>
    </source>
</evidence>
<evidence type="ECO:0000305" key="2"/>
<comment type="function">
    <text>Hydrolytic deamination of the S-triazine substrate melamine.</text>
</comment>
<comment type="pathway">
    <text>Xenobiotic degradation; melamine degradation.</text>
</comment>
<comment type="similarity">
    <text evidence="2">Belongs to the metallo-dependent hydrolases superfamily. ATZ/TRZ family.</text>
</comment>
<accession>Q52725</accession>